<proteinExistence type="predicted"/>
<sequence length="358" mass="41212">MNVIHIAETVKGGVATVINNLTENNEIDSHVICPESQSKEIYCAQKTLFSRTGRNISSLSSLFLVIIKTLKYNKFDVIHLHSSFAGFIVRALFAFKLINKKKYKVIYTPHCFSFIMDTKKWKKKVYIYIERILAKQTDCIIANSYYEYKCAVDAGISKNKIKVVYNAVSLDGQEKLERIKKCNENEVQKEKINILFVGRFDKQKGYDYLLNVIKVADVSKYTFNIIGDSVHDVFEKIEKENVVYYGWVDNKELPAYFCENDVLLMPSRWESFGLVAVEAQLYGVPVIANNVASLPEVISDGLTGMLVNFEDANKVVEIMDSHTIHFWNEKKEACREFASNKFRKSDMVNSYVQIYKSY</sequence>
<name>YC07_KLEPN</name>
<feature type="chain" id="PRO_0000066158" description="Uncharacterized 41.2 kDa protein in cps region">
    <location>
        <begin position="1"/>
        <end position="358"/>
    </location>
</feature>
<reference key="1">
    <citation type="journal article" date="1995" name="J. Bacteriol.">
        <title>Genomic organization of the Klebsiella pneumoniae cps region responsible for serotype K2 capsular polysaccharide synthesis in the virulent strain Chedid.</title>
        <authorList>
            <person name="Arakawa Y."/>
            <person name="Wacharotayankun R."/>
            <person name="Nagatsuka T."/>
            <person name="Ito H."/>
            <person name="Kato N."/>
            <person name="Ohta M."/>
        </authorList>
    </citation>
    <scope>NUCLEOTIDE SEQUENCE [GENOMIC DNA]</scope>
    <source>
        <strain>Chedid</strain>
    </source>
</reference>
<dbReference type="EMBL" id="D21242">
    <property type="protein sequence ID" value="BAA04778.1"/>
    <property type="molecule type" value="Genomic_DNA"/>
</dbReference>
<dbReference type="RefSeq" id="WP_004213677.1">
    <property type="nucleotide sequence ID" value="NZ_WTEH01000017.1"/>
</dbReference>
<dbReference type="SMR" id="Q48453"/>
<dbReference type="CAZy" id="GT4">
    <property type="family name" value="Glycosyltransferase Family 4"/>
</dbReference>
<dbReference type="GO" id="GO:0016757">
    <property type="term" value="F:glycosyltransferase activity"/>
    <property type="evidence" value="ECO:0007669"/>
    <property type="project" value="InterPro"/>
</dbReference>
<dbReference type="Gene3D" id="3.40.50.2000">
    <property type="entry name" value="Glycogen Phosphorylase B"/>
    <property type="match status" value="2"/>
</dbReference>
<dbReference type="InterPro" id="IPR001296">
    <property type="entry name" value="Glyco_trans_1"/>
</dbReference>
<dbReference type="InterPro" id="IPR028098">
    <property type="entry name" value="Glyco_trans_4-like_N"/>
</dbReference>
<dbReference type="InterPro" id="IPR050194">
    <property type="entry name" value="Glycosyltransferase_grp1"/>
</dbReference>
<dbReference type="PANTHER" id="PTHR45947">
    <property type="entry name" value="SULFOQUINOVOSYL TRANSFERASE SQD2"/>
    <property type="match status" value="1"/>
</dbReference>
<dbReference type="PANTHER" id="PTHR45947:SF3">
    <property type="entry name" value="SULFOQUINOVOSYL TRANSFERASE SQD2"/>
    <property type="match status" value="1"/>
</dbReference>
<dbReference type="Pfam" id="PF13439">
    <property type="entry name" value="Glyco_transf_4"/>
    <property type="match status" value="1"/>
</dbReference>
<dbReference type="Pfam" id="PF00534">
    <property type="entry name" value="Glycos_transf_1"/>
    <property type="match status" value="1"/>
</dbReference>
<dbReference type="SUPFAM" id="SSF53756">
    <property type="entry name" value="UDP-Glycosyltransferase/glycogen phosphorylase"/>
    <property type="match status" value="1"/>
</dbReference>
<organism>
    <name type="scientific">Klebsiella pneumoniae</name>
    <dbReference type="NCBI Taxonomy" id="573"/>
    <lineage>
        <taxon>Bacteria</taxon>
        <taxon>Pseudomonadati</taxon>
        <taxon>Pseudomonadota</taxon>
        <taxon>Gammaproteobacteria</taxon>
        <taxon>Enterobacterales</taxon>
        <taxon>Enterobacteriaceae</taxon>
        <taxon>Klebsiella/Raoultella group</taxon>
        <taxon>Klebsiella</taxon>
        <taxon>Klebsiella pneumoniae complex</taxon>
    </lineage>
</organism>
<accession>Q48453</accession>
<protein>
    <recommendedName>
        <fullName>Uncharacterized 41.2 kDa protein in cps region</fullName>
    </recommendedName>
    <alternativeName>
        <fullName>ORF7</fullName>
    </alternativeName>
</protein>